<keyword id="KW-0217">Developmental protein</keyword>
<keyword id="KW-0472">Membrane</keyword>
<keyword id="KW-0597">Phosphoprotein</keyword>
<keyword id="KW-1185">Reference proteome</keyword>
<keyword id="KW-0677">Repeat</keyword>
<reference key="1">
    <citation type="journal article" date="1999" name="Cell">
        <title>Discs Lost, a novel multi-PDZ domain protein, establishes and maintains epithelial polarity.</title>
        <authorList>
            <person name="Bhat M.A."/>
            <person name="Izaddoost S."/>
            <person name="Lu Y."/>
            <person name="Cho K.-O."/>
            <person name="Choi K.-W."/>
            <person name="Bellen H.J."/>
        </authorList>
    </citation>
    <scope>NUCLEOTIDE SEQUENCE [MRNA]</scope>
    <scope>SUBCELLULAR LOCATION</scope>
    <scope>TISSUE SPECIFICITY</scope>
    <scope>DEVELOPMENTAL STAGE</scope>
    <scope>INTERACTION WITH NRX AND CRB</scope>
</reference>
<reference key="2">
    <citation type="journal article" date="2003" name="Cell">
        <authorList>
            <person name="Bhat M.A."/>
            <person name="Izaddoost S."/>
            <person name="Lu Y."/>
            <person name="Cho K.-O."/>
            <person name="Choi K.-W."/>
            <person name="Bellen H.J."/>
        </authorList>
    </citation>
    <scope>ERRATUM OF PUBMED:10102271</scope>
</reference>
<reference key="3">
    <citation type="journal article" date="2000" name="J. Cell Biol.">
        <title>Apical, lateral, and basal polarization cues contribute to the development of the follicular epithelium during Drosophila oogenesis.</title>
        <authorList>
            <person name="Tanentzapf G."/>
            <person name="Smith C."/>
            <person name="McGlade J."/>
            <person name="Tepass U."/>
        </authorList>
    </citation>
    <scope>NUCLEOTIDE SEQUENCE [MRNA]</scope>
    <scope>SUBCELLULAR LOCATION</scope>
    <scope>TISSUE SPECIFICITY</scope>
    <scope>INTERACTION WITH CRB</scope>
</reference>
<reference key="4">
    <citation type="journal article" date="2000" name="Science">
        <title>The genome sequence of Drosophila melanogaster.</title>
        <authorList>
            <person name="Adams M.D."/>
            <person name="Celniker S.E."/>
            <person name="Holt R.A."/>
            <person name="Evans C.A."/>
            <person name="Gocayne J.D."/>
            <person name="Amanatides P.G."/>
            <person name="Scherer S.E."/>
            <person name="Li P.W."/>
            <person name="Hoskins R.A."/>
            <person name="Galle R.F."/>
            <person name="George R.A."/>
            <person name="Lewis S.E."/>
            <person name="Richards S."/>
            <person name="Ashburner M."/>
            <person name="Henderson S.N."/>
            <person name="Sutton G.G."/>
            <person name="Wortman J.R."/>
            <person name="Yandell M.D."/>
            <person name="Zhang Q."/>
            <person name="Chen L.X."/>
            <person name="Brandon R.C."/>
            <person name="Rogers Y.-H.C."/>
            <person name="Blazej R.G."/>
            <person name="Champe M."/>
            <person name="Pfeiffer B.D."/>
            <person name="Wan K.H."/>
            <person name="Doyle C."/>
            <person name="Baxter E.G."/>
            <person name="Helt G."/>
            <person name="Nelson C.R."/>
            <person name="Miklos G.L.G."/>
            <person name="Abril J.F."/>
            <person name="Agbayani A."/>
            <person name="An H.-J."/>
            <person name="Andrews-Pfannkoch C."/>
            <person name="Baldwin D."/>
            <person name="Ballew R.M."/>
            <person name="Basu A."/>
            <person name="Baxendale J."/>
            <person name="Bayraktaroglu L."/>
            <person name="Beasley E.M."/>
            <person name="Beeson K.Y."/>
            <person name="Benos P.V."/>
            <person name="Berman B.P."/>
            <person name="Bhandari D."/>
            <person name="Bolshakov S."/>
            <person name="Borkova D."/>
            <person name="Botchan M.R."/>
            <person name="Bouck J."/>
            <person name="Brokstein P."/>
            <person name="Brottier P."/>
            <person name="Burtis K.C."/>
            <person name="Busam D.A."/>
            <person name="Butler H."/>
            <person name="Cadieu E."/>
            <person name="Center A."/>
            <person name="Chandra I."/>
            <person name="Cherry J.M."/>
            <person name="Cawley S."/>
            <person name="Dahlke C."/>
            <person name="Davenport L.B."/>
            <person name="Davies P."/>
            <person name="de Pablos B."/>
            <person name="Delcher A."/>
            <person name="Deng Z."/>
            <person name="Mays A.D."/>
            <person name="Dew I."/>
            <person name="Dietz S.M."/>
            <person name="Dodson K."/>
            <person name="Doup L.E."/>
            <person name="Downes M."/>
            <person name="Dugan-Rocha S."/>
            <person name="Dunkov B.C."/>
            <person name="Dunn P."/>
            <person name="Durbin K.J."/>
            <person name="Evangelista C.C."/>
            <person name="Ferraz C."/>
            <person name="Ferriera S."/>
            <person name="Fleischmann W."/>
            <person name="Fosler C."/>
            <person name="Gabrielian A.E."/>
            <person name="Garg N.S."/>
            <person name="Gelbart W.M."/>
            <person name="Glasser K."/>
            <person name="Glodek A."/>
            <person name="Gong F."/>
            <person name="Gorrell J.H."/>
            <person name="Gu Z."/>
            <person name="Guan P."/>
            <person name="Harris M."/>
            <person name="Harris N.L."/>
            <person name="Harvey D.A."/>
            <person name="Heiman T.J."/>
            <person name="Hernandez J.R."/>
            <person name="Houck J."/>
            <person name="Hostin D."/>
            <person name="Houston K.A."/>
            <person name="Howland T.J."/>
            <person name="Wei M.-H."/>
            <person name="Ibegwam C."/>
            <person name="Jalali M."/>
            <person name="Kalush F."/>
            <person name="Karpen G.H."/>
            <person name="Ke Z."/>
            <person name="Kennison J.A."/>
            <person name="Ketchum K.A."/>
            <person name="Kimmel B.E."/>
            <person name="Kodira C.D."/>
            <person name="Kraft C.L."/>
            <person name="Kravitz S."/>
            <person name="Kulp D."/>
            <person name="Lai Z."/>
            <person name="Lasko P."/>
            <person name="Lei Y."/>
            <person name="Levitsky A.A."/>
            <person name="Li J.H."/>
            <person name="Li Z."/>
            <person name="Liang Y."/>
            <person name="Lin X."/>
            <person name="Liu X."/>
            <person name="Mattei B."/>
            <person name="McIntosh T.C."/>
            <person name="McLeod M.P."/>
            <person name="McPherson D."/>
            <person name="Merkulov G."/>
            <person name="Milshina N.V."/>
            <person name="Mobarry C."/>
            <person name="Morris J."/>
            <person name="Moshrefi A."/>
            <person name="Mount S.M."/>
            <person name="Moy M."/>
            <person name="Murphy B."/>
            <person name="Murphy L."/>
            <person name="Muzny D.M."/>
            <person name="Nelson D.L."/>
            <person name="Nelson D.R."/>
            <person name="Nelson K.A."/>
            <person name="Nixon K."/>
            <person name="Nusskern D.R."/>
            <person name="Pacleb J.M."/>
            <person name="Palazzolo M."/>
            <person name="Pittman G.S."/>
            <person name="Pan S."/>
            <person name="Pollard J."/>
            <person name="Puri V."/>
            <person name="Reese M.G."/>
            <person name="Reinert K."/>
            <person name="Remington K."/>
            <person name="Saunders R.D.C."/>
            <person name="Scheeler F."/>
            <person name="Shen H."/>
            <person name="Shue B.C."/>
            <person name="Siden-Kiamos I."/>
            <person name="Simpson M."/>
            <person name="Skupski M.P."/>
            <person name="Smith T.J."/>
            <person name="Spier E."/>
            <person name="Spradling A.C."/>
            <person name="Stapleton M."/>
            <person name="Strong R."/>
            <person name="Sun E."/>
            <person name="Svirskas R."/>
            <person name="Tector C."/>
            <person name="Turner R."/>
            <person name="Venter E."/>
            <person name="Wang A.H."/>
            <person name="Wang X."/>
            <person name="Wang Z.-Y."/>
            <person name="Wassarman D.A."/>
            <person name="Weinstock G.M."/>
            <person name="Weissenbach J."/>
            <person name="Williams S.M."/>
            <person name="Woodage T."/>
            <person name="Worley K.C."/>
            <person name="Wu D."/>
            <person name="Yang S."/>
            <person name="Yao Q.A."/>
            <person name="Ye J."/>
            <person name="Yeh R.-F."/>
            <person name="Zaveri J.S."/>
            <person name="Zhan M."/>
            <person name="Zhang G."/>
            <person name="Zhao Q."/>
            <person name="Zheng L."/>
            <person name="Zheng X.H."/>
            <person name="Zhong F.N."/>
            <person name="Zhong W."/>
            <person name="Zhou X."/>
            <person name="Zhu S.C."/>
            <person name="Zhu X."/>
            <person name="Smith H.O."/>
            <person name="Gibbs R.A."/>
            <person name="Myers E.W."/>
            <person name="Rubin G.M."/>
            <person name="Venter J.C."/>
        </authorList>
    </citation>
    <scope>NUCLEOTIDE SEQUENCE [LARGE SCALE GENOMIC DNA]</scope>
    <source>
        <strain>Berkeley</strain>
    </source>
</reference>
<reference key="5">
    <citation type="journal article" date="2002" name="Genome Biol.">
        <title>Annotation of the Drosophila melanogaster euchromatic genome: a systematic review.</title>
        <authorList>
            <person name="Misra S."/>
            <person name="Crosby M.A."/>
            <person name="Mungall C.J."/>
            <person name="Matthews B.B."/>
            <person name="Campbell K.S."/>
            <person name="Hradecky P."/>
            <person name="Huang Y."/>
            <person name="Kaminker J.S."/>
            <person name="Millburn G.H."/>
            <person name="Prochnik S.E."/>
            <person name="Smith C.D."/>
            <person name="Tupy J.L."/>
            <person name="Whitfield E.J."/>
            <person name="Bayraktaroglu L."/>
            <person name="Berman B.P."/>
            <person name="Bettencourt B.R."/>
            <person name="Celniker S.E."/>
            <person name="de Grey A.D.N.J."/>
            <person name="Drysdale R.A."/>
            <person name="Harris N.L."/>
            <person name="Richter J."/>
            <person name="Russo S."/>
            <person name="Schroeder A.J."/>
            <person name="Shu S.Q."/>
            <person name="Stapleton M."/>
            <person name="Yamada C."/>
            <person name="Ashburner M."/>
            <person name="Gelbart W.M."/>
            <person name="Rubin G.M."/>
            <person name="Lewis S.E."/>
        </authorList>
    </citation>
    <scope>GENOME REANNOTATION</scope>
    <source>
        <strain>Berkeley</strain>
    </source>
</reference>
<reference key="6">
    <citation type="journal article" date="2002" name="Genome Biol.">
        <title>A Drosophila full-length cDNA resource.</title>
        <authorList>
            <person name="Stapleton M."/>
            <person name="Carlson J.W."/>
            <person name="Brokstein P."/>
            <person name="Yu C."/>
            <person name="Champe M."/>
            <person name="George R.A."/>
            <person name="Guarin H."/>
            <person name="Kronmiller B."/>
            <person name="Pacleb J.M."/>
            <person name="Park S."/>
            <person name="Wan K.H."/>
            <person name="Rubin G.M."/>
            <person name="Celniker S.E."/>
        </authorList>
    </citation>
    <scope>NUCLEOTIDE SEQUENCE [LARGE SCALE MRNA]</scope>
    <source>
        <strain>Berkeley</strain>
        <tissue>Embryo</tissue>
    </source>
</reference>
<reference key="7">
    <citation type="journal article" date="2001" name="Nature">
        <title>Drosophila Stardust is a partner of Crumbs in the control of epithelial cell polarity.</title>
        <authorList>
            <person name="Bachmann A."/>
            <person name="Schneider M."/>
            <person name="Theilenberg E."/>
            <person name="Grawe F."/>
            <person name="Knust E."/>
        </authorList>
    </citation>
    <scope>IDENTIFICATION IN A SAC COMPLEX WITH CRB AND SDT</scope>
</reference>
<reference key="8">
    <citation type="journal article" date="2003" name="Development">
        <title>Interaction of Par-6 and Crumbs complexes is essential for photoreceptor morphogenesis in Drosophila.</title>
        <authorList>
            <person name="Nam S.-C."/>
            <person name="Choi K.-W."/>
        </authorList>
    </citation>
    <scope>INTERACTION WITH PAR-6</scope>
</reference>
<reference key="9">
    <citation type="journal article" date="2003" name="Dev. Cell">
        <title>The Drosophila cell survival gene discs lost encodes a cytoplasmic Codanin-1-like protein, not a homolog of tight junction PDZ protein Patj.</title>
        <authorList>
            <person name="Pielage J."/>
            <person name="Stork T."/>
            <person name="Bunse I."/>
            <person name="Klaembt C."/>
        </authorList>
    </citation>
    <scope>FUNCTION</scope>
</reference>
<reference key="10">
    <citation type="journal article" date="2008" name="J. Proteome Res.">
        <title>Phosphoproteome analysis of Drosophila melanogaster embryos.</title>
        <authorList>
            <person name="Zhai B."/>
            <person name="Villen J."/>
            <person name="Beausoleil S.A."/>
            <person name="Mintseris J."/>
            <person name="Gygi S.P."/>
        </authorList>
    </citation>
    <scope>PHOSPHORYLATION [LARGE SCALE ANALYSIS] AT SER-682</scope>
    <scope>IDENTIFICATION BY MASS SPECTROMETRY</scope>
    <source>
        <tissue>Embryo</tissue>
    </source>
</reference>
<reference key="11">
    <citation type="journal article" date="2023" name="Cell. Mol. Life Sci.">
        <title>A neuroprotective role of Ufmylation through Atg9 in the aging brain of Drosophila.</title>
        <authorList>
            <person name="Li H."/>
            <person name="Yu Z."/>
            <person name="Niu Z."/>
            <person name="Cheng Y."/>
            <person name="Wei Z."/>
            <person name="Cai Y."/>
            <person name="Ma F."/>
            <person name="Hu L."/>
            <person name="Zhu J."/>
            <person name="Zhang W."/>
        </authorList>
    </citation>
    <scope>DEVELOPMENTAL STAGE</scope>
</reference>
<accession>Q9NB04</accession>
<accession>Q9UA56</accession>
<accession>Q9XZ35</accession>
<dbReference type="EMBL" id="AF103942">
    <property type="protein sequence ID" value="AAD43031.1"/>
    <property type="status" value="ALT_INIT"/>
    <property type="molecule type" value="mRNA"/>
</dbReference>
<dbReference type="EMBL" id="AF274350">
    <property type="protein sequence ID" value="AAF81829.1"/>
    <property type="molecule type" value="mRNA"/>
</dbReference>
<dbReference type="EMBL" id="AE014296">
    <property type="protein sequence ID" value="AAN11498.1"/>
    <property type="molecule type" value="Genomic_DNA"/>
</dbReference>
<dbReference type="EMBL" id="AF132193">
    <property type="protein sequence ID" value="AAD34781.1"/>
    <property type="molecule type" value="mRNA"/>
</dbReference>
<dbReference type="RefSeq" id="NP_477342.1">
    <property type="nucleotide sequence ID" value="NM_057994.5"/>
</dbReference>
<dbReference type="RefSeq" id="NP_599144.1">
    <property type="nucleotide sequence ID" value="NM_134317.4"/>
</dbReference>
<dbReference type="RefSeq" id="NP_728674.1">
    <property type="nucleotide sequence ID" value="NM_167917.4"/>
</dbReference>
<dbReference type="SMR" id="Q9NB04"/>
<dbReference type="BioGRID" id="68832">
    <property type="interactions" value="25"/>
</dbReference>
<dbReference type="ComplexPortal" id="CPX-2408">
    <property type="entry name" value="CRUMBS-PALS1-PATJ cell polarity complex"/>
</dbReference>
<dbReference type="FunCoup" id="Q9NB04">
    <property type="interactions" value="99"/>
</dbReference>
<dbReference type="IntAct" id="Q9NB04">
    <property type="interactions" value="6"/>
</dbReference>
<dbReference type="MINT" id="Q9NB04"/>
<dbReference type="STRING" id="7227.FBpp0072662"/>
<dbReference type="GlyGen" id="Q9NB04">
    <property type="glycosylation" value="3 sites, 1 O-linked glycan (1 site)"/>
</dbReference>
<dbReference type="iPTMnet" id="Q9NB04"/>
<dbReference type="PaxDb" id="7227-FBpp0072662"/>
<dbReference type="DNASU" id="44100"/>
<dbReference type="EnsemblMetazoa" id="FBtr0072779">
    <property type="protein sequence ID" value="FBpp0072662"/>
    <property type="gene ID" value="FBgn0067864"/>
</dbReference>
<dbReference type="EnsemblMetazoa" id="FBtr0072781">
    <property type="protein sequence ID" value="FBpp0072664"/>
    <property type="gene ID" value="FBgn0067864"/>
</dbReference>
<dbReference type="EnsemblMetazoa" id="FBtr0301625">
    <property type="protein sequence ID" value="FBpp0290839"/>
    <property type="gene ID" value="FBgn0067864"/>
</dbReference>
<dbReference type="GeneID" id="44100"/>
<dbReference type="KEGG" id="dme:Dmel_CG12021"/>
<dbReference type="AGR" id="FB:FBgn0067864"/>
<dbReference type="CTD" id="10207"/>
<dbReference type="FlyBase" id="FBgn0067864">
    <property type="gene designation" value="Patj"/>
</dbReference>
<dbReference type="VEuPathDB" id="VectorBase:FBgn0067864"/>
<dbReference type="eggNOG" id="KOG3528">
    <property type="taxonomic scope" value="Eukaryota"/>
</dbReference>
<dbReference type="GeneTree" id="ENSGT00940000167964"/>
<dbReference type="HOGENOM" id="CLU_006771_1_0_1"/>
<dbReference type="InParanoid" id="Q9NB04"/>
<dbReference type="OMA" id="KPDIIME"/>
<dbReference type="OrthoDB" id="6022242at2759"/>
<dbReference type="PhylomeDB" id="Q9NB04"/>
<dbReference type="Reactome" id="R-DME-983168">
    <property type="pathway name" value="Antigen processing: Ubiquitination &amp; Proteasome degradation"/>
</dbReference>
<dbReference type="SignaLink" id="Q9NB04"/>
<dbReference type="BioGRID-ORCS" id="44100">
    <property type="hits" value="0 hits in 3 CRISPR screens"/>
</dbReference>
<dbReference type="GenomeRNAi" id="44100"/>
<dbReference type="PRO" id="PR:Q9NB04"/>
<dbReference type="Proteomes" id="UP000000803">
    <property type="component" value="Chromosome 3L"/>
</dbReference>
<dbReference type="Bgee" id="FBgn0067864">
    <property type="expression patterns" value="Expressed in second segment of antenna (Drosophila) and 65 other cell types or tissues"/>
</dbReference>
<dbReference type="ExpressionAtlas" id="Q9NB04">
    <property type="expression patterns" value="baseline and differential"/>
</dbReference>
<dbReference type="GO" id="GO:0005912">
    <property type="term" value="C:adherens junction"/>
    <property type="evidence" value="ECO:0000314"/>
    <property type="project" value="FlyBase"/>
</dbReference>
<dbReference type="GO" id="GO:0045179">
    <property type="term" value="C:apical cortex"/>
    <property type="evidence" value="ECO:0000303"/>
    <property type="project" value="FlyBase"/>
</dbReference>
<dbReference type="GO" id="GO:0016324">
    <property type="term" value="C:apical plasma membrane"/>
    <property type="evidence" value="ECO:0000314"/>
    <property type="project" value="FlyBase"/>
</dbReference>
<dbReference type="GO" id="GO:0016327">
    <property type="term" value="C:apicolateral plasma membrane"/>
    <property type="evidence" value="ECO:0000314"/>
    <property type="project" value="FlyBase"/>
</dbReference>
<dbReference type="GO" id="GO:0005737">
    <property type="term" value="C:cytoplasm"/>
    <property type="evidence" value="ECO:0000304"/>
    <property type="project" value="FlyBase"/>
</dbReference>
<dbReference type="GO" id="GO:0005635">
    <property type="term" value="C:nuclear envelope"/>
    <property type="evidence" value="ECO:0000303"/>
    <property type="project" value="FlyBase"/>
</dbReference>
<dbReference type="GO" id="GO:0005886">
    <property type="term" value="C:plasma membrane"/>
    <property type="evidence" value="ECO:0000303"/>
    <property type="project" value="FlyBase"/>
</dbReference>
<dbReference type="GO" id="GO:0005918">
    <property type="term" value="C:septate junction"/>
    <property type="evidence" value="ECO:0000304"/>
    <property type="project" value="FlyBase"/>
</dbReference>
<dbReference type="GO" id="GO:0035003">
    <property type="term" value="C:subapical complex"/>
    <property type="evidence" value="ECO:0000314"/>
    <property type="project" value="FlyBase"/>
</dbReference>
<dbReference type="GO" id="GO:0032033">
    <property type="term" value="F:myosin II light chain binding"/>
    <property type="evidence" value="ECO:0000314"/>
    <property type="project" value="FlyBase"/>
</dbReference>
<dbReference type="GO" id="GO:0017020">
    <property type="term" value="F:myosin phosphatase regulator activity"/>
    <property type="evidence" value="ECO:0000316"/>
    <property type="project" value="FlyBase"/>
</dbReference>
<dbReference type="GO" id="GO:0005080">
    <property type="term" value="F:protein kinase C binding"/>
    <property type="evidence" value="ECO:0000353"/>
    <property type="project" value="FlyBase"/>
</dbReference>
<dbReference type="GO" id="GO:0034334">
    <property type="term" value="P:adherens junction maintenance"/>
    <property type="evidence" value="ECO:0000316"/>
    <property type="project" value="FlyBase"/>
</dbReference>
<dbReference type="GO" id="GO:0034332">
    <property type="term" value="P:adherens junction organization"/>
    <property type="evidence" value="ECO:0000315"/>
    <property type="project" value="FlyBase"/>
</dbReference>
<dbReference type="GO" id="GO:0045176">
    <property type="term" value="P:apical protein localization"/>
    <property type="evidence" value="ECO:0000304"/>
    <property type="project" value="FlyBase"/>
</dbReference>
<dbReference type="GO" id="GO:0007043">
    <property type="term" value="P:cell-cell junction assembly"/>
    <property type="evidence" value="ECO:0000303"/>
    <property type="project" value="FlyBase"/>
</dbReference>
<dbReference type="GO" id="GO:0001736">
    <property type="term" value="P:establishment of planar polarity"/>
    <property type="evidence" value="ECO:0000315"/>
    <property type="project" value="FlyBase"/>
</dbReference>
<dbReference type="GO" id="GO:0035088">
    <property type="term" value="P:establishment or maintenance of apical/basal cell polarity"/>
    <property type="evidence" value="ECO:0000315"/>
    <property type="project" value="FlyBase"/>
</dbReference>
<dbReference type="GO" id="GO:0016332">
    <property type="term" value="P:establishment or maintenance of polarity of embryonic epithelium"/>
    <property type="evidence" value="ECO:0000304"/>
    <property type="project" value="FlyBase"/>
</dbReference>
<dbReference type="GO" id="GO:0016334">
    <property type="term" value="P:establishment or maintenance of polarity of follicular epithelium"/>
    <property type="evidence" value="ECO:0000353"/>
    <property type="project" value="FlyBase"/>
</dbReference>
<dbReference type="GO" id="GO:0002009">
    <property type="term" value="P:morphogenesis of an epithelium"/>
    <property type="evidence" value="ECO:0000304"/>
    <property type="project" value="FlyBase"/>
</dbReference>
<dbReference type="GO" id="GO:0016333">
    <property type="term" value="P:morphogenesis of follicular epithelium"/>
    <property type="evidence" value="ECO:0000315"/>
    <property type="project" value="FlyBase"/>
</dbReference>
<dbReference type="GO" id="GO:0045494">
    <property type="term" value="P:photoreceptor cell maintenance"/>
    <property type="evidence" value="ECO:0000315"/>
    <property type="project" value="FlyBase"/>
</dbReference>
<dbReference type="GO" id="GO:0008594">
    <property type="term" value="P:photoreceptor cell morphogenesis"/>
    <property type="evidence" value="ECO:0000315"/>
    <property type="project" value="FlyBase"/>
</dbReference>
<dbReference type="GO" id="GO:0035209">
    <property type="term" value="P:pupal development"/>
    <property type="evidence" value="ECO:0000315"/>
    <property type="project" value="FlyBase"/>
</dbReference>
<dbReference type="CDD" id="cd06667">
    <property type="entry name" value="PDZ2_MUPP1-like"/>
    <property type="match status" value="1"/>
</dbReference>
<dbReference type="CDD" id="cd06791">
    <property type="entry name" value="PDZ3_MUPP1-like"/>
    <property type="match status" value="1"/>
</dbReference>
<dbReference type="CDD" id="cd06668">
    <property type="entry name" value="PDZ4_MUPP1-like"/>
    <property type="match status" value="1"/>
</dbReference>
<dbReference type="CDD" id="cd06669">
    <property type="entry name" value="PDZ5_MUPP1-like"/>
    <property type="match status" value="1"/>
</dbReference>
<dbReference type="FunFam" id="2.30.42.10:FF:000070">
    <property type="entry name" value="Multiple PDZ domain protein"/>
    <property type="match status" value="1"/>
</dbReference>
<dbReference type="FunFam" id="2.30.42.10:FF:000125">
    <property type="entry name" value="PATJ, crumbs cell polarity complex component"/>
    <property type="match status" value="1"/>
</dbReference>
<dbReference type="FunFam" id="2.30.42.10:FF:000210">
    <property type="entry name" value="Patj, isoform B"/>
    <property type="match status" value="1"/>
</dbReference>
<dbReference type="Gene3D" id="2.30.42.10">
    <property type="match status" value="4"/>
</dbReference>
<dbReference type="Gene3D" id="1.10.287.650">
    <property type="entry name" value="L27 domain"/>
    <property type="match status" value="1"/>
</dbReference>
<dbReference type="InterPro" id="IPR004172">
    <property type="entry name" value="L27_dom"/>
</dbReference>
<dbReference type="InterPro" id="IPR001478">
    <property type="entry name" value="PDZ"/>
</dbReference>
<dbReference type="InterPro" id="IPR051342">
    <property type="entry name" value="PDZ_scaffold"/>
</dbReference>
<dbReference type="InterPro" id="IPR036034">
    <property type="entry name" value="PDZ_sf"/>
</dbReference>
<dbReference type="PANTHER" id="PTHR19964">
    <property type="entry name" value="MULTIPLE PDZ DOMAIN PROTEIN"/>
    <property type="match status" value="1"/>
</dbReference>
<dbReference type="PANTHER" id="PTHR19964:SF92">
    <property type="entry name" value="PATJ HOMOLOG"/>
    <property type="match status" value="1"/>
</dbReference>
<dbReference type="Pfam" id="PF00595">
    <property type="entry name" value="PDZ"/>
    <property type="match status" value="4"/>
</dbReference>
<dbReference type="SMART" id="SM00569">
    <property type="entry name" value="L27"/>
    <property type="match status" value="1"/>
</dbReference>
<dbReference type="SMART" id="SM00228">
    <property type="entry name" value="PDZ"/>
    <property type="match status" value="4"/>
</dbReference>
<dbReference type="SUPFAM" id="SSF50156">
    <property type="entry name" value="PDZ domain-like"/>
    <property type="match status" value="4"/>
</dbReference>
<dbReference type="PROSITE" id="PS51022">
    <property type="entry name" value="L27"/>
    <property type="match status" value="1"/>
</dbReference>
<dbReference type="PROSITE" id="PS50106">
    <property type="entry name" value="PDZ"/>
    <property type="match status" value="4"/>
</dbReference>
<proteinExistence type="evidence at protein level"/>
<protein>
    <recommendedName>
        <fullName>Patj homolog</fullName>
    </recommendedName>
</protein>
<comment type="function">
    <text evidence="8">Involved in cell polarity establishment. Probably participates in the assembly, positioning and maintenance of adherens junctions via its interaction with the SAC complex.</text>
</comment>
<comment type="subunit">
    <text evidence="4 5 6 7">Component of the SAC complex, a complex composed of crb, Patj and sdt. Interacts directly with nrx via its third and fourth PDZ domains. Interacts directly with par-6, possibly mediating a link between the SAC complex and the par-6 complex, which is composed of par-6, baz and aPKC.</text>
</comment>
<comment type="interaction">
    <interactant intactId="EBI-442573">
        <id>Q9NB04</id>
    </interactant>
    <interactant intactId="EBI-160861">
        <id>A1Z9X0</id>
        <label>aPKC</label>
    </interactant>
    <organismsDiffer>false</organismsDiffer>
    <experiments>2</experiments>
</comment>
<comment type="subcellular location">
    <subcellularLocation>
        <location evidence="4 5">Membrane</location>
    </subcellularLocation>
    <text>Membrane-associated. Localizes to the subapical domain of cells. Sdt is required for its localization. At mitotic cycles 13 and 14, during cellularization, it localizes at the leading edge of the invaginating membranes. It is then exclusively localized to the basal area of columnal epithelial cells. In the germline, it localizes at the membrane of the nurse cells during early and mid oogenesis. Later, it is found in the nuclear membrane in close association with actin filaments that connect the nuclei of the nurse cells with the plasma membrane.</text>
</comment>
<comment type="tissue specificity">
    <text evidence="4 5">Expressed in primary and some secondary epithelial cells such as ectodermal cells, salivary glands, foregut, hindgut and invaginating tracheal cells. Also expressed in specific cells of the peripheral nervous system. Expressed in the germline.</text>
</comment>
<comment type="developmental stage">
    <text evidence="4 10">Expressed both maternally and zygotically. Appears in mitotic cycle 11 when the furrows made by the imprint of the embryonic nuclei become apparent (PubMed:10102271). Expression in the adult brain declines with age (PubMed:37086384).</text>
</comment>
<comment type="similarity">
    <text evidence="11">Belongs to the Patj family.</text>
</comment>
<comment type="caution">
    <text evidence="11">Was originally thought to be the Disks lost (Dlt) protein. However, PubMed:14667407 showed that it is not the case and renamed it Patj. This drastically changes the first conclusions drawn about its essential function, since the mutant used contained defects for another protein, which is now called Dlt. If its association with proteins involved in cell polarization complexes is clear, Patj is not essential since its absence apparently does not lead to important defects.</text>
</comment>
<comment type="sequence caution" evidence="11">
    <conflict type="erroneous initiation">
        <sequence resource="EMBL-CDS" id="AAD43031"/>
    </conflict>
</comment>
<gene>
    <name type="primary">Patj</name>
    <name type="ORF">CG12021</name>
</gene>
<evidence type="ECO:0000255" key="1">
    <source>
        <dbReference type="PROSITE-ProRule" id="PRU00143"/>
    </source>
</evidence>
<evidence type="ECO:0000255" key="2">
    <source>
        <dbReference type="PROSITE-ProRule" id="PRU00365"/>
    </source>
</evidence>
<evidence type="ECO:0000256" key="3">
    <source>
        <dbReference type="SAM" id="MobiDB-lite"/>
    </source>
</evidence>
<evidence type="ECO:0000269" key="4">
    <source>
    </source>
</evidence>
<evidence type="ECO:0000269" key="5">
    <source>
    </source>
</evidence>
<evidence type="ECO:0000269" key="6">
    <source>
    </source>
</evidence>
<evidence type="ECO:0000269" key="7">
    <source>
    </source>
</evidence>
<evidence type="ECO:0000269" key="8">
    <source>
    </source>
</evidence>
<evidence type="ECO:0000269" key="9">
    <source>
    </source>
</evidence>
<evidence type="ECO:0000269" key="10">
    <source>
    </source>
</evidence>
<evidence type="ECO:0000305" key="11"/>
<sequence>MHLSADISSALQQIEAVKKGIDESDDPKLQMQTAESLSTILGILQDPVFRTIVHVQDSLSELNAQLAQHPSMLPNDFDIDVAGNLVLSLNGGEVMYDFDEQRSSSHSHSAPGSPDKSGGVGEEPRPQSQNSKGAGVADLYATDYAQIQAIELVNDGTGLGFGIIGARNSGVIVKTILPGGVADKDGRLRSGDHILQIGDVNLHEMVSEQVAAVLRQSGTHVRLVVARPVEQSVPTPQYALEPGTAVVPTRVLVDPAELERYLISTGYPEIFGESSTASTPQTTTEDDRFVYRGETSMLIDPNIDLEELLALPETEKLQVELKKDANGLGITIAGYVCEKEELSGIFVKSVSPGSAADLSGRIRVNDRIIEVDGQSLQGYSNHQAVELLKKSGQVVNLRLERYLRGPKFEQLQQAIAANDKLPSSAPGTPSRAPMPTPVATTSSATTTPSRSITRELEEEALPAPEAFMTTPPSVTTMTTTTLSSFGAGKQLVAVRDSLDGSTKIIPTEVVPLADKTEAKNSGVITRHKYYTDPELSDDAETEIIRKWQKIVGSDVEVIVAQIKKFAVGGLGISLEGTVDVEGGREVRPHHYIRSILPDGPVGVNGVLRSGDELLEVNGERLLGMNHLEVVAILKELPLDVRMVCGRNRNSSLLPFSDDTLKKLSNNFENLLPATDRLVKAKSDGSLATAGSVADGDSVAAAAASFSKLKSRSLEPLTGLAMWSSQPQIIELVKGDRGLGFSILDYQDPLDPNDTLIVIRSLVPGGVAQLDGRLIPGDRLLFVNSINLENASLDQAVQALKGASKGVVRIGVAKPLPMTDNSLKACSNASTTSEETLDAQPSPPALPTVAPPAMPPSASMGAEPDLIPDWRN</sequence>
<name>PATJ_DROME</name>
<feature type="chain" id="PRO_0000094591" description="Patj homolog">
    <location>
        <begin position="1"/>
        <end position="871"/>
    </location>
</feature>
<feature type="domain" description="L27" evidence="2">
    <location>
        <begin position="3"/>
        <end position="67"/>
    </location>
</feature>
<feature type="domain" description="PDZ 1" evidence="1">
    <location>
        <begin position="149"/>
        <end position="229"/>
    </location>
</feature>
<feature type="domain" description="PDZ 2" evidence="1">
    <location>
        <begin position="318"/>
        <end position="403"/>
    </location>
</feature>
<feature type="domain" description="PDZ 3" evidence="1">
    <location>
        <begin position="559"/>
        <end position="648"/>
    </location>
</feature>
<feature type="domain" description="PDZ 4" evidence="1">
    <location>
        <begin position="728"/>
        <end position="814"/>
    </location>
</feature>
<feature type="region of interest" description="Disordered" evidence="3">
    <location>
        <begin position="100"/>
        <end position="134"/>
    </location>
</feature>
<feature type="region of interest" description="Disordered" evidence="3">
    <location>
        <begin position="420"/>
        <end position="453"/>
    </location>
</feature>
<feature type="region of interest" description="Disordered" evidence="3">
    <location>
        <begin position="822"/>
        <end position="871"/>
    </location>
</feature>
<feature type="compositionally biased region" description="Low complexity" evidence="3">
    <location>
        <begin position="437"/>
        <end position="451"/>
    </location>
</feature>
<feature type="compositionally biased region" description="Polar residues" evidence="3">
    <location>
        <begin position="822"/>
        <end position="833"/>
    </location>
</feature>
<feature type="compositionally biased region" description="Pro residues" evidence="3">
    <location>
        <begin position="840"/>
        <end position="854"/>
    </location>
</feature>
<feature type="modified residue" description="Phosphoserine" evidence="9">
    <location>
        <position position="682"/>
    </location>
</feature>
<feature type="sequence conflict" description="In Ref. 3; AAF81829." evidence="11" ref="3">
    <original>S</original>
    <variation>N</variation>
    <location>
        <position position="349"/>
    </location>
</feature>
<feature type="sequence conflict" description="In Ref. 3; AAF81829." evidence="11" ref="3">
    <original>S</original>
    <variation>N</variation>
    <location>
        <position position="359"/>
    </location>
</feature>
<organism>
    <name type="scientific">Drosophila melanogaster</name>
    <name type="common">Fruit fly</name>
    <dbReference type="NCBI Taxonomy" id="7227"/>
    <lineage>
        <taxon>Eukaryota</taxon>
        <taxon>Metazoa</taxon>
        <taxon>Ecdysozoa</taxon>
        <taxon>Arthropoda</taxon>
        <taxon>Hexapoda</taxon>
        <taxon>Insecta</taxon>
        <taxon>Pterygota</taxon>
        <taxon>Neoptera</taxon>
        <taxon>Endopterygota</taxon>
        <taxon>Diptera</taxon>
        <taxon>Brachycera</taxon>
        <taxon>Muscomorpha</taxon>
        <taxon>Ephydroidea</taxon>
        <taxon>Drosophilidae</taxon>
        <taxon>Drosophila</taxon>
        <taxon>Sophophora</taxon>
    </lineage>
</organism>